<feature type="chain" id="PRO_0000150804" description="Olfactory receptor 1J1">
    <location>
        <begin position="1"/>
        <end position="313"/>
    </location>
</feature>
<feature type="topological domain" description="Extracellular" evidence="1">
    <location>
        <begin position="1"/>
        <end position="25"/>
    </location>
</feature>
<feature type="transmembrane region" description="Helical; Name=1" evidence="1">
    <location>
        <begin position="26"/>
        <end position="46"/>
    </location>
</feature>
<feature type="topological domain" description="Cytoplasmic" evidence="1">
    <location>
        <begin position="47"/>
        <end position="57"/>
    </location>
</feature>
<feature type="transmembrane region" description="Helical; Name=2" evidence="1">
    <location>
        <begin position="58"/>
        <end position="78"/>
    </location>
</feature>
<feature type="topological domain" description="Extracellular" evidence="1">
    <location>
        <begin position="79"/>
        <end position="97"/>
    </location>
</feature>
<feature type="transmembrane region" description="Helical; Name=3" evidence="1">
    <location>
        <begin position="98"/>
        <end position="118"/>
    </location>
</feature>
<feature type="topological domain" description="Cytoplasmic" evidence="1">
    <location>
        <begin position="119"/>
        <end position="142"/>
    </location>
</feature>
<feature type="transmembrane region" description="Helical; Name=4" evidence="1">
    <location>
        <begin position="143"/>
        <end position="163"/>
    </location>
</feature>
<feature type="topological domain" description="Extracellular" evidence="1">
    <location>
        <begin position="164"/>
        <end position="196"/>
    </location>
</feature>
<feature type="transmembrane region" description="Helical; Name=5" evidence="1">
    <location>
        <begin position="197"/>
        <end position="217"/>
    </location>
</feature>
<feature type="topological domain" description="Cytoplasmic" evidence="1">
    <location>
        <begin position="218"/>
        <end position="240"/>
    </location>
</feature>
<feature type="transmembrane region" description="Helical; Name=6" evidence="1">
    <location>
        <begin position="241"/>
        <end position="261"/>
    </location>
</feature>
<feature type="topological domain" description="Extracellular" evidence="1">
    <location>
        <begin position="262"/>
        <end position="271"/>
    </location>
</feature>
<feature type="transmembrane region" description="Helical; Name=7" evidence="1">
    <location>
        <begin position="272"/>
        <end position="292"/>
    </location>
</feature>
<feature type="topological domain" description="Cytoplasmic" evidence="1">
    <location>
        <begin position="293"/>
        <end position="313"/>
    </location>
</feature>
<feature type="glycosylation site" description="N-linked (GlcNAc...) asparagine" evidence="1">
    <location>
        <position position="5"/>
    </location>
</feature>
<feature type="disulfide bond" evidence="2">
    <location>
        <begin position="97"/>
        <end position="189"/>
    </location>
</feature>
<sequence>MRLKNHSSVSEFLLLGFPIRPEQGGIFFSLFLAMYLITVLGNLLIILLIRLDSHLHTPMYFFLSHLAFTDISFSSVTVPKMLTKVQNQPIPITYEECVSQTYFFIFFADLDSFLITSMAYDRYMAICHPLHYITIMSQSRCAMLVAVSWVIASACALLHSLLLDQLSFCADHTVPHFFCDLGALLKLSCSDTSLNQLVIFTAGLAAIMLPFLCILISYGRIGFTILQVPTTKGICKALSTCGSHLSVVALYYGSIIGLYFLPPSNSKINNNIVASVMYTVVTPMLNPFIYSLRNKDMKGALKKLLSKKTEFSK</sequence>
<protein>
    <recommendedName>
        <fullName evidence="3">Olfactory receptor 1J1</fullName>
    </recommendedName>
    <alternativeName>
        <fullName>Odorant receptor K10</fullName>
    </alternativeName>
    <alternativeName>
        <fullName>Olfactory receptor 136-14</fullName>
    </alternativeName>
    <alternativeName>
        <fullName>Olfactory receptor 3</fullName>
    </alternativeName>
</protein>
<keyword id="KW-1003">Cell membrane</keyword>
<keyword id="KW-1015">Disulfide bond</keyword>
<keyword id="KW-0297">G-protein coupled receptor</keyword>
<keyword id="KW-0325">Glycoprotein</keyword>
<keyword id="KW-0472">Membrane</keyword>
<keyword id="KW-0552">Olfaction</keyword>
<keyword id="KW-0675">Receptor</keyword>
<keyword id="KW-1185">Reference proteome</keyword>
<keyword id="KW-0716">Sensory transduction</keyword>
<keyword id="KW-0807">Transducer</keyword>
<keyword id="KW-0812">Transmembrane</keyword>
<keyword id="KW-1133">Transmembrane helix</keyword>
<reference key="1">
    <citation type="journal article" date="2002" name="Nat. Neurosci.">
        <title>The olfactory receptor gene superfamily of the mouse.</title>
        <authorList>
            <person name="Zhang X."/>
            <person name="Firestein S."/>
        </authorList>
    </citation>
    <scope>NUCLEOTIDE SEQUENCE [GENOMIC DNA]</scope>
</reference>
<reference key="2">
    <citation type="journal article" date="2003" name="Genome Biol.">
        <title>Odorant receptor expressed sequence tags demonstrate olfactory expression of over 400 genes, extensive alternate splicing and unequal expression levels.</title>
        <authorList>
            <person name="Young J.M."/>
            <person name="Shykind B.M."/>
            <person name="Lane R.P."/>
            <person name="Tonnes-Priddy L."/>
            <person name="Ross J.A."/>
            <person name="Walker M."/>
            <person name="Williams E.M."/>
            <person name="Trask B.J."/>
        </authorList>
    </citation>
    <scope>NUCLEOTIDE SEQUENCE [GENOMIC DNA]</scope>
</reference>
<reference key="3">
    <citation type="journal article" date="1996" name="Proc. Natl. Acad. Sci. U.S.A.">
        <title>The chromosomal distribution of mouse odorant receptor genes.</title>
        <authorList>
            <person name="Sullivan S.L."/>
            <person name="Adamson M.C."/>
            <person name="Ressler K.J."/>
            <person name="Kozak C.A."/>
            <person name="Buck L.B."/>
        </authorList>
    </citation>
    <scope>NUCLEOTIDE SEQUENCE [GENOMIC DNA] OF 128-239</scope>
    <source>
        <strain>C57BL/6J</strain>
    </source>
</reference>
<name>OR1J1_MOUSE</name>
<evidence type="ECO:0000255" key="1"/>
<evidence type="ECO:0000255" key="2">
    <source>
        <dbReference type="PROSITE-ProRule" id="PRU00521"/>
    </source>
</evidence>
<evidence type="ECO:0000305" key="3"/>
<evidence type="ECO:0000312" key="4">
    <source>
        <dbReference type="MGI" id="MGI:102697"/>
    </source>
</evidence>
<gene>
    <name evidence="4" type="primary">Or1j1</name>
    <name evidence="4" type="synonym">Mor136-14</name>
    <name evidence="4" type="synonym">Olfr3</name>
</gene>
<comment type="function">
    <text evidence="3">Odorant receptor.</text>
</comment>
<comment type="subcellular location">
    <subcellularLocation>
        <location evidence="3">Cell membrane</location>
        <topology evidence="1">Multi-pass membrane protein</topology>
    </subcellularLocation>
</comment>
<comment type="similarity">
    <text evidence="2">Belongs to the G-protein coupled receptor 1 family.</text>
</comment>
<dbReference type="EMBL" id="AY073471">
    <property type="protein sequence ID" value="AAL61134.1"/>
    <property type="molecule type" value="Genomic_DNA"/>
</dbReference>
<dbReference type="EMBL" id="AY317444">
    <property type="protein sequence ID" value="AAP70883.1"/>
    <property type="molecule type" value="Genomic_DNA"/>
</dbReference>
<dbReference type="EMBL" id="U28768">
    <property type="protein sequence ID" value="AAC52391.1"/>
    <property type="molecule type" value="Genomic_DNA"/>
</dbReference>
<dbReference type="CCDS" id="CCDS15982.1"/>
<dbReference type="RefSeq" id="NP_996786.1">
    <property type="nucleotide sequence ID" value="NM_206903.1"/>
</dbReference>
<dbReference type="SMR" id="Q60879"/>
<dbReference type="FunCoup" id="Q60879">
    <property type="interactions" value="1457"/>
</dbReference>
<dbReference type="STRING" id="10090.ENSMUSP00000149118"/>
<dbReference type="GlyCosmos" id="Q60879">
    <property type="glycosylation" value="1 site, No reported glycans"/>
</dbReference>
<dbReference type="GlyGen" id="Q60879">
    <property type="glycosylation" value="1 site"/>
</dbReference>
<dbReference type="iPTMnet" id="Q60879"/>
<dbReference type="PhosphoSitePlus" id="Q60879"/>
<dbReference type="PaxDb" id="10090-ENSMUSP00000097728"/>
<dbReference type="Antibodypedia" id="30306">
    <property type="antibodies" value="49 antibodies from 17 providers"/>
</dbReference>
<dbReference type="DNASU" id="18328"/>
<dbReference type="Ensembl" id="ENSMUST00000100151.2">
    <property type="protein sequence ID" value="ENSMUSP00000097728.2"/>
    <property type="gene ID" value="ENSMUSG00000075384.3"/>
</dbReference>
<dbReference type="Ensembl" id="ENSMUST00000213988.2">
    <property type="protein sequence ID" value="ENSMUSP00000149118.2"/>
    <property type="gene ID" value="ENSMUSG00000075384.3"/>
</dbReference>
<dbReference type="GeneID" id="18328"/>
<dbReference type="KEGG" id="mmu:18328"/>
<dbReference type="UCSC" id="uc008jly.1">
    <property type="organism name" value="mouse"/>
</dbReference>
<dbReference type="AGR" id="MGI:102697"/>
<dbReference type="CTD" id="347168"/>
<dbReference type="MGI" id="MGI:102697">
    <property type="gene designation" value="Or1j1"/>
</dbReference>
<dbReference type="VEuPathDB" id="HostDB:ENSMUSG00000075384"/>
<dbReference type="eggNOG" id="ENOG502QVH7">
    <property type="taxonomic scope" value="Eukaryota"/>
</dbReference>
<dbReference type="GeneTree" id="ENSGT00940000163027"/>
<dbReference type="HOGENOM" id="CLU_012526_1_0_1"/>
<dbReference type="InParanoid" id="Q60879"/>
<dbReference type="OMA" id="IVPHFFC"/>
<dbReference type="OrthoDB" id="9615894at2759"/>
<dbReference type="PhylomeDB" id="Q60879"/>
<dbReference type="TreeFam" id="TF337210"/>
<dbReference type="BioGRID-ORCS" id="18328">
    <property type="hits" value="3 hits in 71 CRISPR screens"/>
</dbReference>
<dbReference type="PRO" id="PR:Q60879"/>
<dbReference type="Proteomes" id="UP000000589">
    <property type="component" value="Chromosome 2"/>
</dbReference>
<dbReference type="RNAct" id="Q60879">
    <property type="molecule type" value="protein"/>
</dbReference>
<dbReference type="GO" id="GO:0016020">
    <property type="term" value="C:membrane"/>
    <property type="evidence" value="ECO:0000247"/>
    <property type="project" value="MGI"/>
</dbReference>
<dbReference type="GO" id="GO:0005886">
    <property type="term" value="C:plasma membrane"/>
    <property type="evidence" value="ECO:0007669"/>
    <property type="project" value="UniProtKB-SubCell"/>
</dbReference>
<dbReference type="GO" id="GO:0004930">
    <property type="term" value="F:G protein-coupled receptor activity"/>
    <property type="evidence" value="ECO:0007669"/>
    <property type="project" value="UniProtKB-KW"/>
</dbReference>
<dbReference type="GO" id="GO:0004984">
    <property type="term" value="F:olfactory receptor activity"/>
    <property type="evidence" value="ECO:0000247"/>
    <property type="project" value="MGI"/>
</dbReference>
<dbReference type="GO" id="GO:0007186">
    <property type="term" value="P:G protein-coupled receptor signaling pathway"/>
    <property type="evidence" value="ECO:0000247"/>
    <property type="project" value="MGI"/>
</dbReference>
<dbReference type="GO" id="GO:0007608">
    <property type="term" value="P:sensory perception of smell"/>
    <property type="evidence" value="ECO:0000247"/>
    <property type="project" value="MGI"/>
</dbReference>
<dbReference type="FunFam" id="1.20.1070.10:FF:000009">
    <property type="entry name" value="Olfactory receptor"/>
    <property type="match status" value="1"/>
</dbReference>
<dbReference type="Gene3D" id="1.20.1070.10">
    <property type="entry name" value="Rhodopsin 7-helix transmembrane proteins"/>
    <property type="match status" value="1"/>
</dbReference>
<dbReference type="InterPro" id="IPR000276">
    <property type="entry name" value="GPCR_Rhodpsn"/>
</dbReference>
<dbReference type="InterPro" id="IPR017452">
    <property type="entry name" value="GPCR_Rhodpsn_7TM"/>
</dbReference>
<dbReference type="InterPro" id="IPR000725">
    <property type="entry name" value="Olfact_rcpt"/>
</dbReference>
<dbReference type="PANTHER" id="PTHR48001">
    <property type="entry name" value="OLFACTORY RECEPTOR"/>
    <property type="match status" value="1"/>
</dbReference>
<dbReference type="Pfam" id="PF13853">
    <property type="entry name" value="7tm_4"/>
    <property type="match status" value="1"/>
</dbReference>
<dbReference type="PRINTS" id="PR00237">
    <property type="entry name" value="GPCRRHODOPSN"/>
</dbReference>
<dbReference type="PRINTS" id="PR00245">
    <property type="entry name" value="OLFACTORYR"/>
</dbReference>
<dbReference type="SUPFAM" id="SSF81321">
    <property type="entry name" value="Family A G protein-coupled receptor-like"/>
    <property type="match status" value="1"/>
</dbReference>
<dbReference type="PROSITE" id="PS00237">
    <property type="entry name" value="G_PROTEIN_RECEP_F1_1"/>
    <property type="match status" value="1"/>
</dbReference>
<dbReference type="PROSITE" id="PS50262">
    <property type="entry name" value="G_PROTEIN_RECEP_F1_2"/>
    <property type="match status" value="1"/>
</dbReference>
<organism>
    <name type="scientific">Mus musculus</name>
    <name type="common">Mouse</name>
    <dbReference type="NCBI Taxonomy" id="10090"/>
    <lineage>
        <taxon>Eukaryota</taxon>
        <taxon>Metazoa</taxon>
        <taxon>Chordata</taxon>
        <taxon>Craniata</taxon>
        <taxon>Vertebrata</taxon>
        <taxon>Euteleostomi</taxon>
        <taxon>Mammalia</taxon>
        <taxon>Eutheria</taxon>
        <taxon>Euarchontoglires</taxon>
        <taxon>Glires</taxon>
        <taxon>Rodentia</taxon>
        <taxon>Myomorpha</taxon>
        <taxon>Muroidea</taxon>
        <taxon>Muridae</taxon>
        <taxon>Murinae</taxon>
        <taxon>Mus</taxon>
        <taxon>Mus</taxon>
    </lineage>
</organism>
<proteinExistence type="inferred from homology"/>
<accession>Q60879</accession>
<accession>Q8VFP7</accession>